<accession>Q1IFU1</accession>
<proteinExistence type="inferred from homology"/>
<sequence>MQISVNEFLTPRHIDVQVVSPTRAKITLEPLERGFGHTLGNALRRILLSSMPGCAVVEAEIDGVLHEYSAIEGVQEDVIEILLNLKGLAIKLHGRDEVTLTLSKKGSGVVTAADIQLDHDVEIVNPDHVIANLASNGALNMKLTVARGRGYEPADSRQTDEDESRSIGRLQLDASFSPVRRIAYVVENARVEQRTNLDKLVIDLETNGTLDPEEAIRRAATILQQQLAAFVDLKGDSEPVVVEQEDEIDPILLRPVDDLELTVRSANCLKAENIYYIGDLIQRTEVELLKTPNLGKKSLTEIKDVLASRGLSLGMRLDNWPPASLKKDDKATA</sequence>
<protein>
    <recommendedName>
        <fullName evidence="1">DNA-directed RNA polymerase subunit alpha</fullName>
        <shortName evidence="1">RNAP subunit alpha</shortName>
        <ecNumber evidence="1">2.7.7.6</ecNumber>
    </recommendedName>
    <alternativeName>
        <fullName evidence="1">RNA polymerase subunit alpha</fullName>
    </alternativeName>
    <alternativeName>
        <fullName evidence="1">Transcriptase subunit alpha</fullName>
    </alternativeName>
</protein>
<organism>
    <name type="scientific">Pseudomonas entomophila (strain L48)</name>
    <dbReference type="NCBI Taxonomy" id="384676"/>
    <lineage>
        <taxon>Bacteria</taxon>
        <taxon>Pseudomonadati</taxon>
        <taxon>Pseudomonadota</taxon>
        <taxon>Gammaproteobacteria</taxon>
        <taxon>Pseudomonadales</taxon>
        <taxon>Pseudomonadaceae</taxon>
        <taxon>Pseudomonas</taxon>
    </lineage>
</organism>
<evidence type="ECO:0000255" key="1">
    <source>
        <dbReference type="HAMAP-Rule" id="MF_00059"/>
    </source>
</evidence>
<keyword id="KW-0240">DNA-directed RNA polymerase</keyword>
<keyword id="KW-0548">Nucleotidyltransferase</keyword>
<keyword id="KW-0804">Transcription</keyword>
<keyword id="KW-0808">Transferase</keyword>
<feature type="chain" id="PRO_0000296856" description="DNA-directed RNA polymerase subunit alpha">
    <location>
        <begin position="1"/>
        <end position="333"/>
    </location>
</feature>
<feature type="region of interest" description="Alpha N-terminal domain (alpha-NTD)" evidence="1">
    <location>
        <begin position="1"/>
        <end position="234"/>
    </location>
</feature>
<feature type="region of interest" description="Alpha C-terminal domain (alpha-CTD)" evidence="1">
    <location>
        <begin position="248"/>
        <end position="333"/>
    </location>
</feature>
<name>RPOA_PSEE4</name>
<dbReference type="EC" id="2.7.7.6" evidence="1"/>
<dbReference type="EMBL" id="CT573326">
    <property type="protein sequence ID" value="CAK13461.1"/>
    <property type="molecule type" value="Genomic_DNA"/>
</dbReference>
<dbReference type="RefSeq" id="WP_003255452.1">
    <property type="nucleotide sequence ID" value="NC_008027.1"/>
</dbReference>
<dbReference type="SMR" id="Q1IFU1"/>
<dbReference type="STRING" id="384676.PSEEN0514"/>
<dbReference type="KEGG" id="pen:PSEEN0514"/>
<dbReference type="eggNOG" id="COG0202">
    <property type="taxonomic scope" value="Bacteria"/>
</dbReference>
<dbReference type="HOGENOM" id="CLU_053084_0_1_6"/>
<dbReference type="OrthoDB" id="9805706at2"/>
<dbReference type="Proteomes" id="UP000000658">
    <property type="component" value="Chromosome"/>
</dbReference>
<dbReference type="GO" id="GO:0005737">
    <property type="term" value="C:cytoplasm"/>
    <property type="evidence" value="ECO:0007669"/>
    <property type="project" value="UniProtKB-ARBA"/>
</dbReference>
<dbReference type="GO" id="GO:0000428">
    <property type="term" value="C:DNA-directed RNA polymerase complex"/>
    <property type="evidence" value="ECO:0007669"/>
    <property type="project" value="UniProtKB-KW"/>
</dbReference>
<dbReference type="GO" id="GO:0003677">
    <property type="term" value="F:DNA binding"/>
    <property type="evidence" value="ECO:0007669"/>
    <property type="project" value="UniProtKB-UniRule"/>
</dbReference>
<dbReference type="GO" id="GO:0003899">
    <property type="term" value="F:DNA-directed RNA polymerase activity"/>
    <property type="evidence" value="ECO:0007669"/>
    <property type="project" value="UniProtKB-UniRule"/>
</dbReference>
<dbReference type="GO" id="GO:0046983">
    <property type="term" value="F:protein dimerization activity"/>
    <property type="evidence" value="ECO:0007669"/>
    <property type="project" value="InterPro"/>
</dbReference>
<dbReference type="GO" id="GO:0006351">
    <property type="term" value="P:DNA-templated transcription"/>
    <property type="evidence" value="ECO:0007669"/>
    <property type="project" value="UniProtKB-UniRule"/>
</dbReference>
<dbReference type="CDD" id="cd06928">
    <property type="entry name" value="RNAP_alpha_NTD"/>
    <property type="match status" value="1"/>
</dbReference>
<dbReference type="FunFam" id="1.10.150.20:FF:000001">
    <property type="entry name" value="DNA-directed RNA polymerase subunit alpha"/>
    <property type="match status" value="1"/>
</dbReference>
<dbReference type="FunFam" id="2.170.120.12:FF:000001">
    <property type="entry name" value="DNA-directed RNA polymerase subunit alpha"/>
    <property type="match status" value="1"/>
</dbReference>
<dbReference type="Gene3D" id="1.10.150.20">
    <property type="entry name" value="5' to 3' exonuclease, C-terminal subdomain"/>
    <property type="match status" value="1"/>
</dbReference>
<dbReference type="Gene3D" id="2.170.120.12">
    <property type="entry name" value="DNA-directed RNA polymerase, insert domain"/>
    <property type="match status" value="1"/>
</dbReference>
<dbReference type="Gene3D" id="3.30.1360.10">
    <property type="entry name" value="RNA polymerase, RBP11-like subunit"/>
    <property type="match status" value="1"/>
</dbReference>
<dbReference type="HAMAP" id="MF_00059">
    <property type="entry name" value="RNApol_bact_RpoA"/>
    <property type="match status" value="1"/>
</dbReference>
<dbReference type="InterPro" id="IPR011262">
    <property type="entry name" value="DNA-dir_RNA_pol_insert"/>
</dbReference>
<dbReference type="InterPro" id="IPR011263">
    <property type="entry name" value="DNA-dir_RNA_pol_RpoA/D/Rpb3"/>
</dbReference>
<dbReference type="InterPro" id="IPR011773">
    <property type="entry name" value="DNA-dir_RpoA"/>
</dbReference>
<dbReference type="InterPro" id="IPR036603">
    <property type="entry name" value="RBP11-like"/>
</dbReference>
<dbReference type="InterPro" id="IPR011260">
    <property type="entry name" value="RNAP_asu_C"/>
</dbReference>
<dbReference type="InterPro" id="IPR036643">
    <property type="entry name" value="RNApol_insert_sf"/>
</dbReference>
<dbReference type="NCBIfam" id="NF003513">
    <property type="entry name" value="PRK05182.1-2"/>
    <property type="match status" value="1"/>
</dbReference>
<dbReference type="NCBIfam" id="NF003519">
    <property type="entry name" value="PRK05182.2-5"/>
    <property type="match status" value="1"/>
</dbReference>
<dbReference type="NCBIfam" id="TIGR02027">
    <property type="entry name" value="rpoA"/>
    <property type="match status" value="1"/>
</dbReference>
<dbReference type="Pfam" id="PF01000">
    <property type="entry name" value="RNA_pol_A_bac"/>
    <property type="match status" value="1"/>
</dbReference>
<dbReference type="Pfam" id="PF03118">
    <property type="entry name" value="RNA_pol_A_CTD"/>
    <property type="match status" value="1"/>
</dbReference>
<dbReference type="Pfam" id="PF01193">
    <property type="entry name" value="RNA_pol_L"/>
    <property type="match status" value="1"/>
</dbReference>
<dbReference type="SMART" id="SM00662">
    <property type="entry name" value="RPOLD"/>
    <property type="match status" value="1"/>
</dbReference>
<dbReference type="SUPFAM" id="SSF47789">
    <property type="entry name" value="C-terminal domain of RNA polymerase alpha subunit"/>
    <property type="match status" value="1"/>
</dbReference>
<dbReference type="SUPFAM" id="SSF56553">
    <property type="entry name" value="Insert subdomain of RNA polymerase alpha subunit"/>
    <property type="match status" value="1"/>
</dbReference>
<dbReference type="SUPFAM" id="SSF55257">
    <property type="entry name" value="RBP11-like subunits of RNA polymerase"/>
    <property type="match status" value="1"/>
</dbReference>
<comment type="function">
    <text evidence="1">DNA-dependent RNA polymerase catalyzes the transcription of DNA into RNA using the four ribonucleoside triphosphates as substrates.</text>
</comment>
<comment type="catalytic activity">
    <reaction evidence="1">
        <text>RNA(n) + a ribonucleoside 5'-triphosphate = RNA(n+1) + diphosphate</text>
        <dbReference type="Rhea" id="RHEA:21248"/>
        <dbReference type="Rhea" id="RHEA-COMP:14527"/>
        <dbReference type="Rhea" id="RHEA-COMP:17342"/>
        <dbReference type="ChEBI" id="CHEBI:33019"/>
        <dbReference type="ChEBI" id="CHEBI:61557"/>
        <dbReference type="ChEBI" id="CHEBI:140395"/>
        <dbReference type="EC" id="2.7.7.6"/>
    </reaction>
</comment>
<comment type="subunit">
    <text evidence="1">Homodimer. The RNAP catalytic core consists of 2 alpha, 1 beta, 1 beta' and 1 omega subunit. When a sigma factor is associated with the core the holoenzyme is formed, which can initiate transcription.</text>
</comment>
<comment type="domain">
    <text evidence="1">The N-terminal domain is essential for RNAP assembly and basal transcription, whereas the C-terminal domain is involved in interaction with transcriptional regulators and with upstream promoter elements.</text>
</comment>
<comment type="similarity">
    <text evidence="1">Belongs to the RNA polymerase alpha chain family.</text>
</comment>
<reference key="1">
    <citation type="journal article" date="2006" name="Nat. Biotechnol.">
        <title>Complete genome sequence of the entomopathogenic and metabolically versatile soil bacterium Pseudomonas entomophila.</title>
        <authorList>
            <person name="Vodovar N."/>
            <person name="Vallenet D."/>
            <person name="Cruveiller S."/>
            <person name="Rouy Z."/>
            <person name="Barbe V."/>
            <person name="Acosta C."/>
            <person name="Cattolico L."/>
            <person name="Jubin C."/>
            <person name="Lajus A."/>
            <person name="Segurens B."/>
            <person name="Vacherie B."/>
            <person name="Wincker P."/>
            <person name="Weissenbach J."/>
            <person name="Lemaitre B."/>
            <person name="Medigue C."/>
            <person name="Boccard F."/>
        </authorList>
    </citation>
    <scope>NUCLEOTIDE SEQUENCE [LARGE SCALE GENOMIC DNA]</scope>
    <source>
        <strain>L48</strain>
    </source>
</reference>
<gene>
    <name evidence="1" type="primary">rpoA</name>
    <name type="ordered locus">PSEEN0514</name>
</gene>